<name>MURE_STRP6</name>
<protein>
    <recommendedName>
        <fullName evidence="1">UDP-N-acetylmuramoyl-L-alanyl-D-glutamate--L-lysine ligase</fullName>
        <ecNumber evidence="1">6.3.2.7</ecNumber>
    </recommendedName>
    <alternativeName>
        <fullName evidence="1">L-lysine-adding enzyme</fullName>
    </alternativeName>
    <alternativeName>
        <fullName evidence="1">UDP-MurNAc-L-Ala-D-Glu:L-Lys ligase</fullName>
    </alternativeName>
    <alternativeName>
        <fullName evidence="1">UDP-MurNAc-tripeptide synthetase</fullName>
    </alternativeName>
    <alternativeName>
        <fullName evidence="1">UDP-N-acetylmuramyl-tripeptide synthetase</fullName>
    </alternativeName>
</protein>
<gene>
    <name evidence="1" type="primary">murE</name>
    <name type="ordered locus">M6_Spy0351</name>
</gene>
<dbReference type="EC" id="6.3.2.7" evidence="1"/>
<dbReference type="EMBL" id="CP000003">
    <property type="protein sequence ID" value="AAT86486.1"/>
    <property type="molecule type" value="Genomic_DNA"/>
</dbReference>
<dbReference type="RefSeq" id="WP_011184212.1">
    <property type="nucleotide sequence ID" value="NC_006086.1"/>
</dbReference>
<dbReference type="SMR" id="Q5XDM7"/>
<dbReference type="KEGG" id="spa:M6_Spy0351"/>
<dbReference type="HOGENOM" id="CLU_022291_4_2_9"/>
<dbReference type="UniPathway" id="UPA00219"/>
<dbReference type="Proteomes" id="UP000001167">
    <property type="component" value="Chromosome"/>
</dbReference>
<dbReference type="GO" id="GO:0005737">
    <property type="term" value="C:cytoplasm"/>
    <property type="evidence" value="ECO:0007669"/>
    <property type="project" value="UniProtKB-SubCell"/>
</dbReference>
<dbReference type="GO" id="GO:0005524">
    <property type="term" value="F:ATP binding"/>
    <property type="evidence" value="ECO:0007669"/>
    <property type="project" value="UniProtKB-UniRule"/>
</dbReference>
<dbReference type="GO" id="GO:0000287">
    <property type="term" value="F:magnesium ion binding"/>
    <property type="evidence" value="ECO:0007669"/>
    <property type="project" value="UniProtKB-UniRule"/>
</dbReference>
<dbReference type="GO" id="GO:0047482">
    <property type="term" value="F:UDP-N-acetylmuramoyl-L-alanyl-D-glutamate-L-lysine ligase activity"/>
    <property type="evidence" value="ECO:0007669"/>
    <property type="project" value="UniProtKB-UniRule"/>
</dbReference>
<dbReference type="GO" id="GO:0051301">
    <property type="term" value="P:cell division"/>
    <property type="evidence" value="ECO:0007669"/>
    <property type="project" value="UniProtKB-KW"/>
</dbReference>
<dbReference type="GO" id="GO:0071555">
    <property type="term" value="P:cell wall organization"/>
    <property type="evidence" value="ECO:0007669"/>
    <property type="project" value="UniProtKB-KW"/>
</dbReference>
<dbReference type="GO" id="GO:0009252">
    <property type="term" value="P:peptidoglycan biosynthetic process"/>
    <property type="evidence" value="ECO:0007669"/>
    <property type="project" value="UniProtKB-UniRule"/>
</dbReference>
<dbReference type="GO" id="GO:0008360">
    <property type="term" value="P:regulation of cell shape"/>
    <property type="evidence" value="ECO:0007669"/>
    <property type="project" value="UniProtKB-KW"/>
</dbReference>
<dbReference type="Gene3D" id="3.90.190.20">
    <property type="entry name" value="Mur ligase, C-terminal domain"/>
    <property type="match status" value="1"/>
</dbReference>
<dbReference type="Gene3D" id="3.40.1190.10">
    <property type="entry name" value="Mur-like, catalytic domain"/>
    <property type="match status" value="1"/>
</dbReference>
<dbReference type="Gene3D" id="3.40.1390.10">
    <property type="entry name" value="MurE/MurF, N-terminal domain"/>
    <property type="match status" value="1"/>
</dbReference>
<dbReference type="HAMAP" id="MF_00208">
    <property type="entry name" value="MurE"/>
    <property type="match status" value="1"/>
</dbReference>
<dbReference type="InterPro" id="IPR036565">
    <property type="entry name" value="Mur-like_cat_sf"/>
</dbReference>
<dbReference type="InterPro" id="IPR004101">
    <property type="entry name" value="Mur_ligase_C"/>
</dbReference>
<dbReference type="InterPro" id="IPR036615">
    <property type="entry name" value="Mur_ligase_C_dom_sf"/>
</dbReference>
<dbReference type="InterPro" id="IPR013221">
    <property type="entry name" value="Mur_ligase_cen"/>
</dbReference>
<dbReference type="InterPro" id="IPR035911">
    <property type="entry name" value="MurE/MurF_N"/>
</dbReference>
<dbReference type="InterPro" id="IPR005761">
    <property type="entry name" value="UDP-N-AcMur-Glu-dNH2Pim_ligase"/>
</dbReference>
<dbReference type="NCBIfam" id="TIGR01085">
    <property type="entry name" value="murE"/>
    <property type="match status" value="1"/>
</dbReference>
<dbReference type="NCBIfam" id="NF010628">
    <property type="entry name" value="PRK14022.1"/>
    <property type="match status" value="1"/>
</dbReference>
<dbReference type="PANTHER" id="PTHR23135">
    <property type="entry name" value="MUR LIGASE FAMILY MEMBER"/>
    <property type="match status" value="1"/>
</dbReference>
<dbReference type="PANTHER" id="PTHR23135:SF4">
    <property type="entry name" value="UDP-N-ACETYLMURAMOYL-L-ALANYL-D-GLUTAMATE--2,6-DIAMINOPIMELATE LIGASE MURE HOMOLOG, CHLOROPLASTIC"/>
    <property type="match status" value="1"/>
</dbReference>
<dbReference type="Pfam" id="PF02875">
    <property type="entry name" value="Mur_ligase_C"/>
    <property type="match status" value="1"/>
</dbReference>
<dbReference type="Pfam" id="PF08245">
    <property type="entry name" value="Mur_ligase_M"/>
    <property type="match status" value="1"/>
</dbReference>
<dbReference type="SUPFAM" id="SSF53623">
    <property type="entry name" value="MurD-like peptide ligases, catalytic domain"/>
    <property type="match status" value="1"/>
</dbReference>
<dbReference type="SUPFAM" id="SSF53244">
    <property type="entry name" value="MurD-like peptide ligases, peptide-binding domain"/>
    <property type="match status" value="1"/>
</dbReference>
<dbReference type="SUPFAM" id="SSF63418">
    <property type="entry name" value="MurE/MurF N-terminal domain"/>
    <property type="match status" value="1"/>
</dbReference>
<evidence type="ECO:0000255" key="1">
    <source>
        <dbReference type="HAMAP-Rule" id="MF_00208"/>
    </source>
</evidence>
<keyword id="KW-0067">ATP-binding</keyword>
<keyword id="KW-0131">Cell cycle</keyword>
<keyword id="KW-0132">Cell division</keyword>
<keyword id="KW-0133">Cell shape</keyword>
<keyword id="KW-0961">Cell wall biogenesis/degradation</keyword>
<keyword id="KW-0963">Cytoplasm</keyword>
<keyword id="KW-0436">Ligase</keyword>
<keyword id="KW-0547">Nucleotide-binding</keyword>
<keyword id="KW-0573">Peptidoglycan synthesis</keyword>
<proteinExistence type="inferred from homology"/>
<reference key="1">
    <citation type="journal article" date="2004" name="J. Infect. Dis.">
        <title>Progress toward characterization of the group A Streptococcus metagenome: complete genome sequence of a macrolide-resistant serotype M6 strain.</title>
        <authorList>
            <person name="Banks D.J."/>
            <person name="Porcella S.F."/>
            <person name="Barbian K.D."/>
            <person name="Beres S.B."/>
            <person name="Philips L.E."/>
            <person name="Voyich J.M."/>
            <person name="DeLeo F.R."/>
            <person name="Martin J.M."/>
            <person name="Somerville G.A."/>
            <person name="Musser J.M."/>
        </authorList>
    </citation>
    <scope>NUCLEOTIDE SEQUENCE [LARGE SCALE GENOMIC DNA]</scope>
    <source>
        <strain>ATCC BAA-946 / MGAS10394</strain>
    </source>
</reference>
<accession>Q5XDM7</accession>
<feature type="chain" id="PRO_0000101957" description="UDP-N-acetylmuramoyl-L-alanyl-D-glutamate--L-lysine ligase">
    <location>
        <begin position="1"/>
        <end position="481"/>
    </location>
</feature>
<feature type="short sequence motif" description="L-lysine recognition motif">
    <location>
        <begin position="404"/>
        <end position="407"/>
    </location>
</feature>
<feature type="binding site" evidence="1">
    <location>
        <position position="42"/>
    </location>
    <ligand>
        <name>UDP-N-acetyl-alpha-D-muramoyl-L-alanyl-D-glutamate</name>
        <dbReference type="ChEBI" id="CHEBI:83900"/>
    </ligand>
</feature>
<feature type="binding site" evidence="1">
    <location>
        <begin position="118"/>
        <end position="124"/>
    </location>
    <ligand>
        <name>ATP</name>
        <dbReference type="ChEBI" id="CHEBI:30616"/>
    </ligand>
</feature>
<feature type="binding site" evidence="1">
    <location>
        <position position="158"/>
    </location>
    <ligand>
        <name>UDP-N-acetyl-alpha-D-muramoyl-L-alanyl-D-glutamate</name>
        <dbReference type="ChEBI" id="CHEBI:83900"/>
    </ligand>
</feature>
<feature type="binding site" evidence="1">
    <location>
        <begin position="160"/>
        <end position="161"/>
    </location>
    <ligand>
        <name>UDP-N-acetyl-alpha-D-muramoyl-L-alanyl-D-glutamate</name>
        <dbReference type="ChEBI" id="CHEBI:83900"/>
    </ligand>
</feature>
<feature type="binding site" evidence="1">
    <location>
        <position position="187"/>
    </location>
    <ligand>
        <name>UDP-N-acetyl-alpha-D-muramoyl-L-alanyl-D-glutamate</name>
        <dbReference type="ChEBI" id="CHEBI:83900"/>
    </ligand>
</feature>
<feature type="binding site" evidence="1">
    <location>
        <position position="195"/>
    </location>
    <ligand>
        <name>UDP-N-acetyl-alpha-D-muramoyl-L-alanyl-D-glutamate</name>
        <dbReference type="ChEBI" id="CHEBI:83900"/>
    </ligand>
</feature>
<feature type="modified residue" description="N6-carboxylysine" evidence="1">
    <location>
        <position position="229"/>
    </location>
</feature>
<sequence length="481" mass="53511">MITIEQLLDILKKDHNFREVLDADGYHYHYQGLSFERLSYDSRQVDGKTLFFAKGATFKADYLKEAITNGLQLYISEVDYELGIPVVLVTDIKKAMSLIAMAFYGNPQEKLKLLAFTGTKGKTTAAYFAYHMLKESYKPAMFSTMNTTLDGKTFFKSQLTTPESLDLFAMMAECVTNGMTHLIMEVSSQAYLVDRVYGLTFDVGVFLNISPDHIGPIEHPTFEDYFYHKRLLMENSRAVVINSGMDHFSFLADQVADQEHMFYGPLSDNQITTSQAFSFEAKGQLAGHYDIQLIGHFNQENAMAAGLACLRLGASLADIQKGIAKTRVPGRMEVLTMTNHAKVFVDYAHNGDSLEKLLSVVEEHQTGKLMLILGAPGNKGESRRADFGRVIHQHPNLTVILTADDPNFEDPEDISQEIASHIARPVEIISDREQAIQKAMSLCQGAKDAVIIAGKGADAYQIVKGQQVAYAGDLAIAKHYL</sequence>
<organism>
    <name type="scientific">Streptococcus pyogenes serotype M6 (strain ATCC BAA-946 / MGAS10394)</name>
    <dbReference type="NCBI Taxonomy" id="286636"/>
    <lineage>
        <taxon>Bacteria</taxon>
        <taxon>Bacillati</taxon>
        <taxon>Bacillota</taxon>
        <taxon>Bacilli</taxon>
        <taxon>Lactobacillales</taxon>
        <taxon>Streptococcaceae</taxon>
        <taxon>Streptococcus</taxon>
    </lineage>
</organism>
<comment type="function">
    <text evidence="1">Catalyzes the addition of L-lysine to the nucleotide precursor UDP-N-acetylmuramoyl-L-alanyl-D-glutamate (UMAG) in the biosynthesis of bacterial cell-wall peptidoglycan.</text>
</comment>
<comment type="catalytic activity">
    <reaction evidence="1">
        <text>UDP-N-acetyl-alpha-D-muramoyl-L-alanyl-D-glutamate + L-lysine + ATP = UDP-N-acetyl-alpha-D-muramoyl-L-alanyl-gamma-D-glutamyl-L-lysine + ADP + phosphate + H(+)</text>
        <dbReference type="Rhea" id="RHEA:17969"/>
        <dbReference type="ChEBI" id="CHEBI:15378"/>
        <dbReference type="ChEBI" id="CHEBI:30616"/>
        <dbReference type="ChEBI" id="CHEBI:32551"/>
        <dbReference type="ChEBI" id="CHEBI:43474"/>
        <dbReference type="ChEBI" id="CHEBI:83900"/>
        <dbReference type="ChEBI" id="CHEBI:83903"/>
        <dbReference type="ChEBI" id="CHEBI:456216"/>
        <dbReference type="EC" id="6.3.2.7"/>
    </reaction>
</comment>
<comment type="pathway">
    <text evidence="1">Cell wall biogenesis; peptidoglycan biosynthesis.</text>
</comment>
<comment type="subcellular location">
    <subcellularLocation>
        <location evidence="1">Cytoplasm</location>
    </subcellularLocation>
</comment>
<comment type="PTM">
    <text evidence="1">Carboxylation is probably crucial for Mg(2+) binding and, consequently, for the gamma-phosphate positioning of ATP.</text>
</comment>
<comment type="similarity">
    <text evidence="1">Belongs to the MurCDEF family. MurE subfamily.</text>
</comment>